<comment type="function">
    <text evidence="1">Cell wall formation. Catalyzes the addition of glutamate to the nucleotide precursor UDP-N-acetylmuramoyl-L-alanine (UMA).</text>
</comment>
<comment type="catalytic activity">
    <reaction evidence="1">
        <text>UDP-N-acetyl-alpha-D-muramoyl-L-alanine + D-glutamate + ATP = UDP-N-acetyl-alpha-D-muramoyl-L-alanyl-D-glutamate + ADP + phosphate + H(+)</text>
        <dbReference type="Rhea" id="RHEA:16429"/>
        <dbReference type="ChEBI" id="CHEBI:15378"/>
        <dbReference type="ChEBI" id="CHEBI:29986"/>
        <dbReference type="ChEBI" id="CHEBI:30616"/>
        <dbReference type="ChEBI" id="CHEBI:43474"/>
        <dbReference type="ChEBI" id="CHEBI:83898"/>
        <dbReference type="ChEBI" id="CHEBI:83900"/>
        <dbReference type="ChEBI" id="CHEBI:456216"/>
        <dbReference type="EC" id="6.3.2.9"/>
    </reaction>
</comment>
<comment type="pathway">
    <text evidence="1">Cell wall biogenesis; peptidoglycan biosynthesis.</text>
</comment>
<comment type="subcellular location">
    <subcellularLocation>
        <location evidence="1">Cytoplasm</location>
    </subcellularLocation>
</comment>
<comment type="similarity">
    <text evidence="1">Belongs to the MurCDEF family.</text>
</comment>
<dbReference type="EC" id="6.3.2.9" evidence="1"/>
<dbReference type="EMBL" id="AE017194">
    <property type="protein sequence ID" value="AAS42861.1"/>
    <property type="molecule type" value="Genomic_DNA"/>
</dbReference>
<dbReference type="KEGG" id="bca:BCE_3958"/>
<dbReference type="HOGENOM" id="CLU_032540_0_1_9"/>
<dbReference type="UniPathway" id="UPA00219"/>
<dbReference type="Proteomes" id="UP000002527">
    <property type="component" value="Chromosome"/>
</dbReference>
<dbReference type="GO" id="GO:0005737">
    <property type="term" value="C:cytoplasm"/>
    <property type="evidence" value="ECO:0007669"/>
    <property type="project" value="UniProtKB-SubCell"/>
</dbReference>
<dbReference type="GO" id="GO:0005524">
    <property type="term" value="F:ATP binding"/>
    <property type="evidence" value="ECO:0007669"/>
    <property type="project" value="UniProtKB-UniRule"/>
</dbReference>
<dbReference type="GO" id="GO:0008764">
    <property type="term" value="F:UDP-N-acetylmuramoylalanine-D-glutamate ligase activity"/>
    <property type="evidence" value="ECO:0007669"/>
    <property type="project" value="UniProtKB-UniRule"/>
</dbReference>
<dbReference type="GO" id="GO:0051301">
    <property type="term" value="P:cell division"/>
    <property type="evidence" value="ECO:0007669"/>
    <property type="project" value="UniProtKB-KW"/>
</dbReference>
<dbReference type="GO" id="GO:0071555">
    <property type="term" value="P:cell wall organization"/>
    <property type="evidence" value="ECO:0007669"/>
    <property type="project" value="UniProtKB-KW"/>
</dbReference>
<dbReference type="GO" id="GO:0009252">
    <property type="term" value="P:peptidoglycan biosynthetic process"/>
    <property type="evidence" value="ECO:0007669"/>
    <property type="project" value="UniProtKB-UniRule"/>
</dbReference>
<dbReference type="GO" id="GO:0008360">
    <property type="term" value="P:regulation of cell shape"/>
    <property type="evidence" value="ECO:0007669"/>
    <property type="project" value="UniProtKB-KW"/>
</dbReference>
<dbReference type="Gene3D" id="3.90.190.20">
    <property type="entry name" value="Mur ligase, C-terminal domain"/>
    <property type="match status" value="1"/>
</dbReference>
<dbReference type="Gene3D" id="3.40.1190.10">
    <property type="entry name" value="Mur-like, catalytic domain"/>
    <property type="match status" value="1"/>
</dbReference>
<dbReference type="Gene3D" id="3.40.50.720">
    <property type="entry name" value="NAD(P)-binding Rossmann-like Domain"/>
    <property type="match status" value="1"/>
</dbReference>
<dbReference type="HAMAP" id="MF_00639">
    <property type="entry name" value="MurD"/>
    <property type="match status" value="1"/>
</dbReference>
<dbReference type="InterPro" id="IPR036565">
    <property type="entry name" value="Mur-like_cat_sf"/>
</dbReference>
<dbReference type="InterPro" id="IPR004101">
    <property type="entry name" value="Mur_ligase_C"/>
</dbReference>
<dbReference type="InterPro" id="IPR036615">
    <property type="entry name" value="Mur_ligase_C_dom_sf"/>
</dbReference>
<dbReference type="InterPro" id="IPR013221">
    <property type="entry name" value="Mur_ligase_cen"/>
</dbReference>
<dbReference type="InterPro" id="IPR005762">
    <property type="entry name" value="MurD"/>
</dbReference>
<dbReference type="NCBIfam" id="TIGR01087">
    <property type="entry name" value="murD"/>
    <property type="match status" value="1"/>
</dbReference>
<dbReference type="PANTHER" id="PTHR43692">
    <property type="entry name" value="UDP-N-ACETYLMURAMOYLALANINE--D-GLUTAMATE LIGASE"/>
    <property type="match status" value="1"/>
</dbReference>
<dbReference type="PANTHER" id="PTHR43692:SF1">
    <property type="entry name" value="UDP-N-ACETYLMURAMOYLALANINE--D-GLUTAMATE LIGASE"/>
    <property type="match status" value="1"/>
</dbReference>
<dbReference type="Pfam" id="PF02875">
    <property type="entry name" value="Mur_ligase_C"/>
    <property type="match status" value="1"/>
</dbReference>
<dbReference type="Pfam" id="PF08245">
    <property type="entry name" value="Mur_ligase_M"/>
    <property type="match status" value="1"/>
</dbReference>
<dbReference type="Pfam" id="PF21799">
    <property type="entry name" value="MurD-like_N"/>
    <property type="match status" value="1"/>
</dbReference>
<dbReference type="SUPFAM" id="SSF51984">
    <property type="entry name" value="MurCD N-terminal domain"/>
    <property type="match status" value="1"/>
</dbReference>
<dbReference type="SUPFAM" id="SSF53623">
    <property type="entry name" value="MurD-like peptide ligases, catalytic domain"/>
    <property type="match status" value="1"/>
</dbReference>
<dbReference type="SUPFAM" id="SSF53244">
    <property type="entry name" value="MurD-like peptide ligases, peptide-binding domain"/>
    <property type="match status" value="1"/>
</dbReference>
<proteinExistence type="inferred from homology"/>
<name>MURD_BACC1</name>
<gene>
    <name evidence="1" type="primary">murD</name>
    <name type="ordered locus">BCE_3958</name>
</gene>
<keyword id="KW-0067">ATP-binding</keyword>
<keyword id="KW-0131">Cell cycle</keyword>
<keyword id="KW-0132">Cell division</keyword>
<keyword id="KW-0133">Cell shape</keyword>
<keyword id="KW-0961">Cell wall biogenesis/degradation</keyword>
<keyword id="KW-0963">Cytoplasm</keyword>
<keyword id="KW-0436">Ligase</keyword>
<keyword id="KW-0547">Nucleotide-binding</keyword>
<keyword id="KW-0573">Peptidoglycan synthesis</keyword>
<reference key="1">
    <citation type="journal article" date="2004" name="Nucleic Acids Res.">
        <title>The genome sequence of Bacillus cereus ATCC 10987 reveals metabolic adaptations and a large plasmid related to Bacillus anthracis pXO1.</title>
        <authorList>
            <person name="Rasko D.A."/>
            <person name="Ravel J."/>
            <person name="Oekstad O.A."/>
            <person name="Helgason E."/>
            <person name="Cer R.Z."/>
            <person name="Jiang L."/>
            <person name="Shores K.A."/>
            <person name="Fouts D.E."/>
            <person name="Tourasse N.J."/>
            <person name="Angiuoli S.V."/>
            <person name="Kolonay J.F."/>
            <person name="Nelson W.C."/>
            <person name="Kolstoe A.-B."/>
            <person name="Fraser C.M."/>
            <person name="Read T.D."/>
        </authorList>
    </citation>
    <scope>NUCLEOTIDE SEQUENCE [LARGE SCALE GENOMIC DNA]</scope>
    <source>
        <strain>ATCC 10987 / NRS 248</strain>
    </source>
</reference>
<feature type="chain" id="PRO_0000108960" description="UDP-N-acetylmuramoylalanine--D-glutamate ligase">
    <location>
        <begin position="1"/>
        <end position="450"/>
    </location>
</feature>
<feature type="binding site" evidence="1">
    <location>
        <begin position="119"/>
        <end position="125"/>
    </location>
    <ligand>
        <name>ATP</name>
        <dbReference type="ChEBI" id="CHEBI:30616"/>
    </ligand>
</feature>
<organism>
    <name type="scientific">Bacillus cereus (strain ATCC 10987 / NRS 248)</name>
    <dbReference type="NCBI Taxonomy" id="222523"/>
    <lineage>
        <taxon>Bacteria</taxon>
        <taxon>Bacillati</taxon>
        <taxon>Bacillota</taxon>
        <taxon>Bacilli</taxon>
        <taxon>Bacillales</taxon>
        <taxon>Bacillaceae</taxon>
        <taxon>Bacillus</taxon>
        <taxon>Bacillus cereus group</taxon>
    </lineage>
</organism>
<evidence type="ECO:0000255" key="1">
    <source>
        <dbReference type="HAMAP-Rule" id="MF_00639"/>
    </source>
</evidence>
<sequence>MKTVTEFQNKNILVLGIAKSGYAAATLLQKLGANVIVNDGKPLAENVLAAELQAKGMDVVCGGHPLELLERNISLVVKNPGIPYSNPILVAAKEKQIPIVTEVELAYRISEAPFVGITGSNGKTTTTMLTFEMLKEGQKHPVIAGNIGTVACEVAQDAKENEVVVTELSSFQLMGVELFQPKIAAFLNLFEAHLDYHGTKKEYGLAKANIFKNXTENDYSVINADDADVMALSAYSKGQKVLFSTTKEIEDGACIKDNALYFKGEKVVEVGDIVLPGQHNLENILAAMSIAKLLGVSNEAITAVLKRFTGVKHRLEYVTTINNRKFYNDSKATNMLATEKALSAFTQPTVLLAGGLDRGNEFDDLIPYFKNVKAIVTFGQTAPKLVRAAEKAGLDTIESVDTLDEAVVKAYAHSTDGDVILLSPACASWDQFKTFEERGDIFIQAVHKLI</sequence>
<protein>
    <recommendedName>
        <fullName evidence="1">UDP-N-acetylmuramoylalanine--D-glutamate ligase</fullName>
        <ecNumber evidence="1">6.3.2.9</ecNumber>
    </recommendedName>
    <alternativeName>
        <fullName evidence="1">D-glutamic acid-adding enzyme</fullName>
    </alternativeName>
    <alternativeName>
        <fullName evidence="1">UDP-N-acetylmuramoyl-L-alanyl-D-glutamate synthetase</fullName>
    </alternativeName>
</protein>
<accession>Q732F6</accession>